<keyword id="KW-0046">Antibiotic resistance</keyword>
<keyword id="KW-0997">Cell inner membrane</keyword>
<keyword id="KW-1003">Cell membrane</keyword>
<keyword id="KW-0133">Cell shape</keyword>
<keyword id="KW-0961">Cell wall biogenesis/degradation</keyword>
<keyword id="KW-0378">Hydrolase</keyword>
<keyword id="KW-0472">Membrane</keyword>
<keyword id="KW-0573">Peptidoglycan synthesis</keyword>
<keyword id="KW-1185">Reference proteome</keyword>
<keyword id="KW-0812">Transmembrane</keyword>
<keyword id="KW-1133">Transmembrane helix</keyword>
<reference key="1">
    <citation type="journal article" date="2002" name="DNA Res.">
        <title>Complete genome structure of the thermophilic cyanobacterium Thermosynechococcus elongatus BP-1.</title>
        <authorList>
            <person name="Nakamura Y."/>
            <person name="Kaneko T."/>
            <person name="Sato S."/>
            <person name="Ikeuchi M."/>
            <person name="Katoh H."/>
            <person name="Sasamoto S."/>
            <person name="Watanabe A."/>
            <person name="Iriguchi M."/>
            <person name="Kawashima K."/>
            <person name="Kimura T."/>
            <person name="Kishida Y."/>
            <person name="Kiyokawa C."/>
            <person name="Kohara M."/>
            <person name="Matsumoto M."/>
            <person name="Matsuno A."/>
            <person name="Nakazaki N."/>
            <person name="Shimpo S."/>
            <person name="Sugimoto M."/>
            <person name="Takeuchi C."/>
            <person name="Yamada M."/>
            <person name="Tabata S."/>
        </authorList>
    </citation>
    <scope>NUCLEOTIDE SEQUENCE [LARGE SCALE GENOMIC DNA]</scope>
    <source>
        <strain>NIES-2133 / IAM M-273 / BP-1</strain>
    </source>
</reference>
<comment type="function">
    <text evidence="1">Catalyzes the dephosphorylation of undecaprenyl diphosphate (UPP). Confers resistance to bacitracin.</text>
</comment>
<comment type="catalytic activity">
    <reaction evidence="1">
        <text>di-trans,octa-cis-undecaprenyl diphosphate + H2O = di-trans,octa-cis-undecaprenyl phosphate + phosphate + H(+)</text>
        <dbReference type="Rhea" id="RHEA:28094"/>
        <dbReference type="ChEBI" id="CHEBI:15377"/>
        <dbReference type="ChEBI" id="CHEBI:15378"/>
        <dbReference type="ChEBI" id="CHEBI:43474"/>
        <dbReference type="ChEBI" id="CHEBI:58405"/>
        <dbReference type="ChEBI" id="CHEBI:60392"/>
        <dbReference type="EC" id="3.6.1.27"/>
    </reaction>
</comment>
<comment type="subcellular location">
    <subcellularLocation>
        <location evidence="1">Cell inner membrane</location>
        <topology evidence="1">Multi-pass membrane protein</topology>
    </subcellularLocation>
</comment>
<comment type="miscellaneous">
    <text>Bacitracin is thought to be involved in the inhibition of peptidoglycan synthesis by sequestering undecaprenyl diphosphate, thereby reducing the pool of lipid carrier available.</text>
</comment>
<comment type="similarity">
    <text evidence="1">Belongs to the UppP family.</text>
</comment>
<sequence>MDIILWLQAVILGLVQGMTEFLPISSTAHLILFSDLLGWKSIWHKTALDAMQFGSVIAVLGYFWQDIHQIVQGSWQAWQRRDWQREEWKLLLGITVGTIPALAAGLLLKLAKVELDRPQIIATMAIAMAILLGLAEQWGSRKRTYQDIGILDGFLVGCGQMIALLPGASRSGSTLAAALALGLERPTAARFSFLLGIPTLTIATLVQAKDVFDEGTLLIPLVIATLSSMVFSYLAIAWLLQFLQRHSTWVFIWYRIGLGSALWGAIALGSLQS</sequence>
<gene>
    <name evidence="1" type="primary">uppP</name>
    <name type="synonym">bacA</name>
    <name type="synonym">upk</name>
    <name type="ordered locus">tlr0737</name>
</gene>
<dbReference type="EC" id="3.6.1.27" evidence="1"/>
<dbReference type="EMBL" id="BA000039">
    <property type="protein sequence ID" value="BAC08288.1"/>
    <property type="molecule type" value="Genomic_DNA"/>
</dbReference>
<dbReference type="RefSeq" id="NP_681526.1">
    <property type="nucleotide sequence ID" value="NC_004113.1"/>
</dbReference>
<dbReference type="RefSeq" id="WP_011056584.1">
    <property type="nucleotide sequence ID" value="NC_004113.1"/>
</dbReference>
<dbReference type="SMR" id="Q8DKW4"/>
<dbReference type="STRING" id="197221.gene:10747327"/>
<dbReference type="EnsemblBacteria" id="BAC08288">
    <property type="protein sequence ID" value="BAC08288"/>
    <property type="gene ID" value="BAC08288"/>
</dbReference>
<dbReference type="KEGG" id="tel:tlr0737"/>
<dbReference type="PATRIC" id="fig|197221.4.peg.777"/>
<dbReference type="eggNOG" id="COG1968">
    <property type="taxonomic scope" value="Bacteria"/>
</dbReference>
<dbReference type="Proteomes" id="UP000000440">
    <property type="component" value="Chromosome"/>
</dbReference>
<dbReference type="GO" id="GO:0005886">
    <property type="term" value="C:plasma membrane"/>
    <property type="evidence" value="ECO:0007669"/>
    <property type="project" value="UniProtKB-SubCell"/>
</dbReference>
<dbReference type="GO" id="GO:0050380">
    <property type="term" value="F:undecaprenyl-diphosphatase activity"/>
    <property type="evidence" value="ECO:0007669"/>
    <property type="project" value="UniProtKB-UniRule"/>
</dbReference>
<dbReference type="GO" id="GO:0071555">
    <property type="term" value="P:cell wall organization"/>
    <property type="evidence" value="ECO:0007669"/>
    <property type="project" value="UniProtKB-KW"/>
</dbReference>
<dbReference type="GO" id="GO:0009252">
    <property type="term" value="P:peptidoglycan biosynthetic process"/>
    <property type="evidence" value="ECO:0007669"/>
    <property type="project" value="UniProtKB-KW"/>
</dbReference>
<dbReference type="GO" id="GO:0008360">
    <property type="term" value="P:regulation of cell shape"/>
    <property type="evidence" value="ECO:0007669"/>
    <property type="project" value="UniProtKB-KW"/>
</dbReference>
<dbReference type="GO" id="GO:0046677">
    <property type="term" value="P:response to antibiotic"/>
    <property type="evidence" value="ECO:0007669"/>
    <property type="project" value="UniProtKB-UniRule"/>
</dbReference>
<dbReference type="HAMAP" id="MF_01006">
    <property type="entry name" value="Undec_diphosphatase"/>
    <property type="match status" value="1"/>
</dbReference>
<dbReference type="InterPro" id="IPR003824">
    <property type="entry name" value="UppP"/>
</dbReference>
<dbReference type="NCBIfam" id="NF001394">
    <property type="entry name" value="PRK00281.2-5"/>
    <property type="match status" value="1"/>
</dbReference>
<dbReference type="NCBIfam" id="TIGR00753">
    <property type="entry name" value="undec_PP_bacA"/>
    <property type="match status" value="1"/>
</dbReference>
<dbReference type="PANTHER" id="PTHR30622">
    <property type="entry name" value="UNDECAPRENYL-DIPHOSPHATASE"/>
    <property type="match status" value="1"/>
</dbReference>
<dbReference type="PANTHER" id="PTHR30622:SF4">
    <property type="entry name" value="UNDECAPRENYL-DIPHOSPHATASE"/>
    <property type="match status" value="1"/>
</dbReference>
<dbReference type="Pfam" id="PF02673">
    <property type="entry name" value="BacA"/>
    <property type="match status" value="1"/>
</dbReference>
<proteinExistence type="inferred from homology"/>
<name>UPPP_THEVB</name>
<accession>Q8DKW4</accession>
<protein>
    <recommendedName>
        <fullName evidence="1">Undecaprenyl-diphosphatase</fullName>
        <ecNumber evidence="1">3.6.1.27</ecNumber>
    </recommendedName>
    <alternativeName>
        <fullName evidence="1">Bacitracin resistance protein</fullName>
    </alternativeName>
    <alternativeName>
        <fullName evidence="1">Undecaprenyl pyrophosphate phosphatase</fullName>
    </alternativeName>
</protein>
<organism>
    <name type="scientific">Thermosynechococcus vestitus (strain NIES-2133 / IAM M-273 / BP-1)</name>
    <dbReference type="NCBI Taxonomy" id="197221"/>
    <lineage>
        <taxon>Bacteria</taxon>
        <taxon>Bacillati</taxon>
        <taxon>Cyanobacteriota</taxon>
        <taxon>Cyanophyceae</taxon>
        <taxon>Acaryochloridales</taxon>
        <taxon>Thermosynechococcaceae</taxon>
        <taxon>Thermosynechococcus</taxon>
    </lineage>
</organism>
<evidence type="ECO:0000255" key="1">
    <source>
        <dbReference type="HAMAP-Rule" id="MF_01006"/>
    </source>
</evidence>
<feature type="chain" id="PRO_0000151223" description="Undecaprenyl-diphosphatase">
    <location>
        <begin position="1"/>
        <end position="273"/>
    </location>
</feature>
<feature type="transmembrane region" description="Helical" evidence="1">
    <location>
        <begin position="3"/>
        <end position="23"/>
    </location>
</feature>
<feature type="transmembrane region" description="Helical" evidence="1">
    <location>
        <begin position="47"/>
        <end position="67"/>
    </location>
</feature>
<feature type="transmembrane region" description="Helical" evidence="1">
    <location>
        <begin position="90"/>
        <end position="110"/>
    </location>
</feature>
<feature type="transmembrane region" description="Helical" evidence="1">
    <location>
        <begin position="120"/>
        <end position="140"/>
    </location>
</feature>
<feature type="transmembrane region" description="Helical" evidence="1">
    <location>
        <begin position="148"/>
        <end position="168"/>
    </location>
</feature>
<feature type="transmembrane region" description="Helical" evidence="1">
    <location>
        <begin position="186"/>
        <end position="206"/>
    </location>
</feature>
<feature type="transmembrane region" description="Helical" evidence="1">
    <location>
        <begin position="217"/>
        <end position="237"/>
    </location>
</feature>
<feature type="transmembrane region" description="Helical" evidence="1">
    <location>
        <begin position="249"/>
        <end position="269"/>
    </location>
</feature>